<protein>
    <recommendedName>
        <fullName evidence="5">K homology domain-containing protein 4</fullName>
    </recommendedName>
</protein>
<reference key="1">
    <citation type="journal article" date="2006" name="Nature">
        <title>Insights from the genome of the biotrophic fungal plant pathogen Ustilago maydis.</title>
        <authorList>
            <person name="Kaemper J."/>
            <person name="Kahmann R."/>
            <person name="Boelker M."/>
            <person name="Ma L.-J."/>
            <person name="Brefort T."/>
            <person name="Saville B.J."/>
            <person name="Banuett F."/>
            <person name="Kronstad J.W."/>
            <person name="Gold S.E."/>
            <person name="Mueller O."/>
            <person name="Perlin M.H."/>
            <person name="Woesten H.A.B."/>
            <person name="de Vries R."/>
            <person name="Ruiz-Herrera J."/>
            <person name="Reynaga-Pena C.G."/>
            <person name="Snetselaar K."/>
            <person name="McCann M."/>
            <person name="Perez-Martin J."/>
            <person name="Feldbruegge M."/>
            <person name="Basse C.W."/>
            <person name="Steinberg G."/>
            <person name="Ibeas J.I."/>
            <person name="Holloman W."/>
            <person name="Guzman P."/>
            <person name="Farman M.L."/>
            <person name="Stajich J.E."/>
            <person name="Sentandreu R."/>
            <person name="Gonzalez-Prieto J.M."/>
            <person name="Kennell J.C."/>
            <person name="Molina L."/>
            <person name="Schirawski J."/>
            <person name="Mendoza-Mendoza A."/>
            <person name="Greilinger D."/>
            <person name="Muench K."/>
            <person name="Roessel N."/>
            <person name="Scherer M."/>
            <person name="Vranes M."/>
            <person name="Ladendorf O."/>
            <person name="Vincon V."/>
            <person name="Fuchs U."/>
            <person name="Sandrock B."/>
            <person name="Meng S."/>
            <person name="Ho E.C.H."/>
            <person name="Cahill M.J."/>
            <person name="Boyce K.J."/>
            <person name="Klose J."/>
            <person name="Klosterman S.J."/>
            <person name="Deelstra H.J."/>
            <person name="Ortiz-Castellanos L."/>
            <person name="Li W."/>
            <person name="Sanchez-Alonso P."/>
            <person name="Schreier P.H."/>
            <person name="Haeuser-Hahn I."/>
            <person name="Vaupel M."/>
            <person name="Koopmann E."/>
            <person name="Friedrich G."/>
            <person name="Voss H."/>
            <person name="Schlueter T."/>
            <person name="Margolis J."/>
            <person name="Platt D."/>
            <person name="Swimmer C."/>
            <person name="Gnirke A."/>
            <person name="Chen F."/>
            <person name="Vysotskaia V."/>
            <person name="Mannhaupt G."/>
            <person name="Gueldener U."/>
            <person name="Muensterkoetter M."/>
            <person name="Haase D."/>
            <person name="Oesterheld M."/>
            <person name="Mewes H.-W."/>
            <person name="Mauceli E.W."/>
            <person name="DeCaprio D."/>
            <person name="Wade C.M."/>
            <person name="Butler J."/>
            <person name="Young S.K."/>
            <person name="Jaffe D.B."/>
            <person name="Calvo S.E."/>
            <person name="Nusbaum C."/>
            <person name="Galagan J.E."/>
            <person name="Birren B.W."/>
        </authorList>
    </citation>
    <scope>NUCLEOTIDE SEQUENCE [LARGE SCALE GENOMIC DNA]</scope>
    <source>
        <strain>DSM 14603 / FGSC 9021 / UM521</strain>
    </source>
</reference>
<reference key="2">
    <citation type="submission" date="2014-09" db="EMBL/GenBank/DDBJ databases">
        <authorList>
            <person name="Gueldener U."/>
            <person name="Muensterkoetter M."/>
            <person name="Walter M.C."/>
            <person name="Mannhaupt G."/>
            <person name="Kahmann R."/>
        </authorList>
    </citation>
    <scope>GENOME REANNOTATION</scope>
    <source>
        <strain>DSM 14603 / FGSC 9021 / UM521</strain>
    </source>
</reference>
<reference key="3">
    <citation type="journal article" date="2005" name="Eukaryot. Cell">
        <title>Role for RNA-binding proteins implicated in pathogenic development of Ustilago maydis.</title>
        <authorList>
            <person name="Becht P."/>
            <person name="Vollmeister E."/>
            <person name="Feldbruegge M."/>
        </authorList>
    </citation>
    <scope>FUNCTION</scope>
    <scope>DOMAIN</scope>
    <scope>DISRUPTION PHENOTYPE</scope>
</reference>
<reference key="4">
    <citation type="journal article" date="2009" name="RNA">
        <title>Tandem KH domains of Khd4 recognize AUACCC and are essential for regulation of morphology as well as pathogenicity in Ustilago maydis.</title>
        <authorList>
            <person name="Vollmeister E."/>
            <person name="Haag C."/>
            <person name="Zarnack K."/>
            <person name="Baumann S."/>
            <person name="Koenig J."/>
            <person name="Mannhaupt G."/>
            <person name="Feldbruegge M."/>
        </authorList>
    </citation>
    <scope>FUNCTION</scope>
    <scope>DOMAIN</scope>
    <scope>RNA-BINDING</scope>
    <scope>MUTAGENESIS OF 765-GLY--ASN-768 AND 833-GLY--GLY-836</scope>
</reference>
<evidence type="ECO:0000255" key="1">
    <source>
        <dbReference type="PROSITE-ProRule" id="PRU00117"/>
    </source>
</evidence>
<evidence type="ECO:0000256" key="2">
    <source>
        <dbReference type="SAM" id="MobiDB-lite"/>
    </source>
</evidence>
<evidence type="ECO:0000269" key="3">
    <source>
    </source>
</evidence>
<evidence type="ECO:0000269" key="4">
    <source>
    </source>
</evidence>
<evidence type="ECO:0000303" key="5">
    <source>
    </source>
</evidence>
<gene>
    <name evidence="5" type="primary">KHD4</name>
    <name type="ORF">UMAG_03837</name>
</gene>
<sequence length="1416" mass="151429">MDFYSTSFTIPRSIGASSFVTETTNPNGSITAASSSSFSLEAPRPGSHVGARTAPTASAAPEPPASSLPGRFTSMRSRFPPSVKAFMPSAFGGKRTSDRIVEAVGAEKAEADAATGSSSQPVKAEPEQSAPLAPIGERGNARPSKLVNPSLANMDDNGSSQHRDSRSTVGTRSSFDISSAASFTADSTAASSAIGVNSSSTTHSASNSISANHVQQDRGISLSQSSKDLQEAIQKLSSDIMANHQCLVSFASVPQNDESRMPPTPLSHPFARQSSFSSLQSLDQLPFPNPNGSSGYPYQQYHPQPIGTPDSHSSAFFPGRAAGEALGSGFPGLNSSSLSLSSLNPPASGSHVAQEVGLSSAQPLRSPQPNAIGASRASLSSMPKPPQYNFHLSGGYQQVMNARGTILRENPFKSTSSIKVPRADVFDVAPASSPPAKESIKEDVRRKLDEVQTATGATITLKNSEVRGADLGYGLETERIVEVLVSGTFESVELARVKVLVILDEIAGLRSETCEIDYKLHNIIGGRKRCVVQKIEEETGTSIYLPSSFLGTFGSSLASRNDGKAVAAHQNQIHITGEFFGVQRARDMLFQVSMHKSKGIISRDAAILPRKLDWMLTDRLEELRSIMIDNGTFVAFPLLGSQTSVISVFGDHRVNIERTIRSIMQLACQFYVASLWLLPVGFDVYMPSPQANLNPTQVAPMLKHVANASGAEVVFKSNCFEIHGLESEVRTAVSALLELELIKSFNFEVRFQIELANEHREFISGKKNGKVNKVMKQCGVRIKFETFNDYNFLIDVSGNDRNGVLQGLGLLQEELPAEMSFHVPEAYHKRIIGVGGKNIQRIMKKFGVYVKFSNAEEFAALGGYLDNEDNVIARTPAKNAANLENLKLSVMELVNPKDKDYISETVTISRRYHRTLLGEKAIFIHDIESKTSSSVRFPARESASDLVTIFGPESQIHIAAQMLLDHVPFEAEFRAPNSTELGDAIHSAEFAALAEQLKRDLSISVSPVIEQRRPGGEAVFKLRLNRSNTDFLPTAKDAIEDFLINRNANIYAAPSRTRSDSFASAFPHFANKLISTAGAAESNESFNTAAAAAAAAAEQARVNERRLRAAASTPDIKALFDAPSQHLHGGPGFASSNGGSAATAANSPLITSPLYTSPYGNGRGFGSDVWGAPTRAFTASNASNATPSLMGLPPPSVGTPGAGLVSAAGPGPIGAGVSVPTSGGIQFPSQPSLHQQSGHRLSDEMHMNRGLEGMSMEDRVKALRKPRSFAHRAQSLDIGAMAAQQASQHASGSMSVGPSTPYGLGPIGTGAPGMSGHFPGMTSSQGTFGGGAPHHLYQPPTPQQQAQQQLQYQQQQQQQQQQQQQPGYGMPHQPQHFHASSASISRLPPGRNTQNPDSTTMDEVSRVLAQLAFDRA</sequence>
<accession>A0A0D1DXB8</accession>
<name>KHD4_MYCMD</name>
<organism>
    <name type="scientific">Mycosarcoma maydis</name>
    <name type="common">Corn smut fungus</name>
    <name type="synonym">Ustilago maydis</name>
    <dbReference type="NCBI Taxonomy" id="5270"/>
    <lineage>
        <taxon>Eukaryota</taxon>
        <taxon>Fungi</taxon>
        <taxon>Dikarya</taxon>
        <taxon>Basidiomycota</taxon>
        <taxon>Ustilaginomycotina</taxon>
        <taxon>Ustilaginomycetes</taxon>
        <taxon>Ustilaginales</taxon>
        <taxon>Ustilaginaceae</taxon>
        <taxon>Mycosarcoma</taxon>
    </lineage>
</organism>
<comment type="function">
    <text evidence="3 4">RNA-binding protein that recognizes the sequence AUACCC via its tandem KH domains 3 and 4, probably in order to promote mRNA instability (PubMed:19854870). Plays an essential role in filamentous growth and virulence (PubMed:15643068).</text>
</comment>
<comment type="domain">
    <text evidence="4">The tandem KH domains 3 and 4 are essential for AUACCC binding.</text>
</comment>
<comment type="disruption phenotype">
    <text evidence="3 4">Affects cell growth, pheromone response, filamentation, cell morphology, as well as pathogenicity (PubMed:15643068). Leads to increased levels of mRNAs containing the AUACCC sequence (PubMed:19854870).</text>
</comment>
<keyword id="KW-1185">Reference proteome</keyword>
<keyword id="KW-0677">Repeat</keyword>
<keyword id="KW-0694">RNA-binding</keyword>
<keyword id="KW-0843">Virulence</keyword>
<feature type="chain" id="PRO_0000454344" description="K homology domain-containing protein 4">
    <location>
        <begin position="1"/>
        <end position="1416"/>
    </location>
</feature>
<feature type="domain" description="KH 1" evidence="1">
    <location>
        <begin position="412"/>
        <end position="504"/>
    </location>
</feature>
<feature type="domain" description="KH 2" evidence="1">
    <location>
        <begin position="508"/>
        <end position="594"/>
    </location>
</feature>
<feature type="domain" description="KH 3" evidence="1">
    <location>
        <begin position="747"/>
        <end position="816"/>
    </location>
</feature>
<feature type="domain" description="KH 4" evidence="1">
    <location>
        <begin position="817"/>
        <end position="892"/>
    </location>
</feature>
<feature type="domain" description="KH 5" evidence="1">
    <location>
        <begin position="900"/>
        <end position="968"/>
    </location>
</feature>
<feature type="region of interest" description="Disordered" evidence="2">
    <location>
        <begin position="25"/>
        <end position="76"/>
    </location>
</feature>
<feature type="region of interest" description="Disordered" evidence="2">
    <location>
        <begin position="108"/>
        <end position="174"/>
    </location>
</feature>
<feature type="region of interest" description="Disordered" evidence="2">
    <location>
        <begin position="196"/>
        <end position="225"/>
    </location>
</feature>
<feature type="region of interest" description="Disordered" evidence="2">
    <location>
        <begin position="255"/>
        <end position="320"/>
    </location>
</feature>
<feature type="region of interest" description="Disordered" evidence="2">
    <location>
        <begin position="341"/>
        <end position="385"/>
    </location>
</feature>
<feature type="region of interest" description="Disordered" evidence="2">
    <location>
        <begin position="1215"/>
        <end position="1240"/>
    </location>
</feature>
<feature type="region of interest" description="Disordered" evidence="2">
    <location>
        <begin position="1289"/>
        <end position="1416"/>
    </location>
</feature>
<feature type="compositionally biased region" description="Low complexity" evidence="2">
    <location>
        <begin position="196"/>
        <end position="213"/>
    </location>
</feature>
<feature type="compositionally biased region" description="Low complexity" evidence="2">
    <location>
        <begin position="273"/>
        <end position="285"/>
    </location>
</feature>
<feature type="compositionally biased region" description="Low complexity" evidence="2">
    <location>
        <begin position="341"/>
        <end position="350"/>
    </location>
</feature>
<feature type="compositionally biased region" description="Polar residues" evidence="2">
    <location>
        <begin position="357"/>
        <end position="369"/>
    </location>
</feature>
<feature type="compositionally biased region" description="Polar residues" evidence="2">
    <location>
        <begin position="1219"/>
        <end position="1239"/>
    </location>
</feature>
<feature type="compositionally biased region" description="Low complexity" evidence="2">
    <location>
        <begin position="1343"/>
        <end position="1374"/>
    </location>
</feature>
<feature type="compositionally biased region" description="Polar residues" evidence="2">
    <location>
        <begin position="1391"/>
        <end position="1402"/>
    </location>
</feature>
<feature type="mutagenesis site" description="Completely abolishes mRNA-binding." evidence="4">
    <original>GKKN</original>
    <variation>AAAA</variation>
    <location>
        <begin position="765"/>
        <end position="768"/>
    </location>
</feature>
<feature type="mutagenesis site" description="Completely abolishes mRNA-binding." evidence="4">
    <original>GVGG</original>
    <variation>AAAA</variation>
    <location>
        <begin position="833"/>
        <end position="836"/>
    </location>
</feature>
<proteinExistence type="evidence at protein level"/>
<dbReference type="EMBL" id="CM003149">
    <property type="protein sequence ID" value="KIS68256.1"/>
    <property type="molecule type" value="Genomic_DNA"/>
</dbReference>
<dbReference type="RefSeq" id="XP_011390271.1">
    <property type="nucleotide sequence ID" value="XM_011391969.1"/>
</dbReference>
<dbReference type="SMR" id="A0A0D1DXB8"/>
<dbReference type="STRING" id="237631.A0A0D1DXB8"/>
<dbReference type="EnsemblFungi" id="KIS68256">
    <property type="protein sequence ID" value="KIS68256"/>
    <property type="gene ID" value="UMAG_03837"/>
</dbReference>
<dbReference type="GeneID" id="23564186"/>
<dbReference type="KEGG" id="uma:UMAG_03837"/>
<dbReference type="VEuPathDB" id="FungiDB:UMAG_03837"/>
<dbReference type="eggNOG" id="KOG2208">
    <property type="taxonomic scope" value="Eukaryota"/>
</dbReference>
<dbReference type="InParanoid" id="A0A0D1DXB8"/>
<dbReference type="OMA" id="FNFEVRF"/>
<dbReference type="OrthoDB" id="271862at2759"/>
<dbReference type="Proteomes" id="UP000000561">
    <property type="component" value="Chromosome 10"/>
</dbReference>
<dbReference type="GO" id="GO:0005737">
    <property type="term" value="C:cytoplasm"/>
    <property type="evidence" value="ECO:0000318"/>
    <property type="project" value="GO_Central"/>
</dbReference>
<dbReference type="GO" id="GO:0003729">
    <property type="term" value="F:mRNA binding"/>
    <property type="evidence" value="ECO:0000318"/>
    <property type="project" value="GO_Central"/>
</dbReference>
<dbReference type="CDD" id="cd00105">
    <property type="entry name" value="KH-I"/>
    <property type="match status" value="1"/>
</dbReference>
<dbReference type="CDD" id="cd22453">
    <property type="entry name" value="KH-I_MUG60_like"/>
    <property type="match status" value="1"/>
</dbReference>
<dbReference type="Gene3D" id="3.30.1370.10">
    <property type="entry name" value="K Homology domain, type 1"/>
    <property type="match status" value="3"/>
</dbReference>
<dbReference type="InterPro" id="IPR004087">
    <property type="entry name" value="KH_dom"/>
</dbReference>
<dbReference type="InterPro" id="IPR004088">
    <property type="entry name" value="KH_dom_type_1"/>
</dbReference>
<dbReference type="InterPro" id="IPR036612">
    <property type="entry name" value="KH_dom_type_1_sf"/>
</dbReference>
<dbReference type="InterPro" id="IPR056553">
    <property type="entry name" value="KH_Mug60-KHD4"/>
</dbReference>
<dbReference type="PANTHER" id="PTHR10627:SF76">
    <property type="entry name" value="KH DOMAIN-CONTAINING PROTEIN YLL032C"/>
    <property type="match status" value="1"/>
</dbReference>
<dbReference type="PANTHER" id="PTHR10627">
    <property type="entry name" value="SCP160"/>
    <property type="match status" value="1"/>
</dbReference>
<dbReference type="Pfam" id="PF00013">
    <property type="entry name" value="KH_1"/>
    <property type="match status" value="2"/>
</dbReference>
<dbReference type="Pfam" id="PF24563">
    <property type="entry name" value="KH_Mug60-KHD4"/>
    <property type="match status" value="1"/>
</dbReference>
<dbReference type="SMART" id="SM00322">
    <property type="entry name" value="KH"/>
    <property type="match status" value="5"/>
</dbReference>
<dbReference type="SUPFAM" id="SSF54791">
    <property type="entry name" value="Eukaryotic type KH-domain (KH-domain type I)"/>
    <property type="match status" value="4"/>
</dbReference>
<dbReference type="PROSITE" id="PS50084">
    <property type="entry name" value="KH_TYPE_1"/>
    <property type="match status" value="2"/>
</dbReference>